<reference key="1">
    <citation type="journal article" date="2007" name="PLoS Genet.">
        <title>Patterns and implications of gene gain and loss in the evolution of Prochlorococcus.</title>
        <authorList>
            <person name="Kettler G.C."/>
            <person name="Martiny A.C."/>
            <person name="Huang K."/>
            <person name="Zucker J."/>
            <person name="Coleman M.L."/>
            <person name="Rodrigue S."/>
            <person name="Chen F."/>
            <person name="Lapidus A."/>
            <person name="Ferriera S."/>
            <person name="Johnson J."/>
            <person name="Steglich C."/>
            <person name="Church G.M."/>
            <person name="Richardson P."/>
            <person name="Chisholm S.W."/>
        </authorList>
    </citation>
    <scope>NUCLEOTIDE SEQUENCE [LARGE SCALE GENOMIC DNA]</scope>
    <source>
        <strain>MIT 9215</strain>
    </source>
</reference>
<name>SYT_PROM2</name>
<organism>
    <name type="scientific">Prochlorococcus marinus (strain MIT 9215)</name>
    <dbReference type="NCBI Taxonomy" id="93060"/>
    <lineage>
        <taxon>Bacteria</taxon>
        <taxon>Bacillati</taxon>
        <taxon>Cyanobacteriota</taxon>
        <taxon>Cyanophyceae</taxon>
        <taxon>Synechococcales</taxon>
        <taxon>Prochlorococcaceae</taxon>
        <taxon>Prochlorococcus</taxon>
    </lineage>
</organism>
<dbReference type="EC" id="6.1.1.3" evidence="1"/>
<dbReference type="EMBL" id="CP000825">
    <property type="protein sequence ID" value="ABV50294.1"/>
    <property type="molecule type" value="Genomic_DNA"/>
</dbReference>
<dbReference type="RefSeq" id="WP_012007414.1">
    <property type="nucleotide sequence ID" value="NC_009840.1"/>
</dbReference>
<dbReference type="SMR" id="A8G3W3"/>
<dbReference type="STRING" id="93060.P9215_06791"/>
<dbReference type="KEGG" id="pmh:P9215_06791"/>
<dbReference type="eggNOG" id="COG0441">
    <property type="taxonomic scope" value="Bacteria"/>
</dbReference>
<dbReference type="HOGENOM" id="CLU_008554_0_1_3"/>
<dbReference type="OrthoDB" id="9802304at2"/>
<dbReference type="Proteomes" id="UP000002014">
    <property type="component" value="Chromosome"/>
</dbReference>
<dbReference type="GO" id="GO:0005829">
    <property type="term" value="C:cytosol"/>
    <property type="evidence" value="ECO:0007669"/>
    <property type="project" value="TreeGrafter"/>
</dbReference>
<dbReference type="GO" id="GO:0005524">
    <property type="term" value="F:ATP binding"/>
    <property type="evidence" value="ECO:0007669"/>
    <property type="project" value="UniProtKB-UniRule"/>
</dbReference>
<dbReference type="GO" id="GO:0046872">
    <property type="term" value="F:metal ion binding"/>
    <property type="evidence" value="ECO:0007669"/>
    <property type="project" value="UniProtKB-KW"/>
</dbReference>
<dbReference type="GO" id="GO:0004829">
    <property type="term" value="F:threonine-tRNA ligase activity"/>
    <property type="evidence" value="ECO:0007669"/>
    <property type="project" value="UniProtKB-UniRule"/>
</dbReference>
<dbReference type="GO" id="GO:0000049">
    <property type="term" value="F:tRNA binding"/>
    <property type="evidence" value="ECO:0007669"/>
    <property type="project" value="UniProtKB-KW"/>
</dbReference>
<dbReference type="GO" id="GO:0006435">
    <property type="term" value="P:threonyl-tRNA aminoacylation"/>
    <property type="evidence" value="ECO:0007669"/>
    <property type="project" value="UniProtKB-UniRule"/>
</dbReference>
<dbReference type="CDD" id="cd01667">
    <property type="entry name" value="TGS_ThrRS"/>
    <property type="match status" value="1"/>
</dbReference>
<dbReference type="CDD" id="cd00771">
    <property type="entry name" value="ThrRS_core"/>
    <property type="match status" value="1"/>
</dbReference>
<dbReference type="FunFam" id="3.10.20.30:FF:000005">
    <property type="entry name" value="Threonine--tRNA ligase"/>
    <property type="match status" value="1"/>
</dbReference>
<dbReference type="FunFam" id="3.30.54.20:FF:000002">
    <property type="entry name" value="Threonine--tRNA ligase"/>
    <property type="match status" value="1"/>
</dbReference>
<dbReference type="FunFam" id="3.30.930.10:FF:000002">
    <property type="entry name" value="Threonine--tRNA ligase"/>
    <property type="match status" value="1"/>
</dbReference>
<dbReference type="FunFam" id="3.30.980.10:FF:000005">
    <property type="entry name" value="Threonyl-tRNA synthetase, mitochondrial"/>
    <property type="match status" value="1"/>
</dbReference>
<dbReference type="Gene3D" id="3.10.20.30">
    <property type="match status" value="1"/>
</dbReference>
<dbReference type="Gene3D" id="3.30.54.20">
    <property type="match status" value="1"/>
</dbReference>
<dbReference type="Gene3D" id="3.40.50.800">
    <property type="entry name" value="Anticodon-binding domain"/>
    <property type="match status" value="1"/>
</dbReference>
<dbReference type="Gene3D" id="3.30.930.10">
    <property type="entry name" value="Bira Bifunctional Protein, Domain 2"/>
    <property type="match status" value="1"/>
</dbReference>
<dbReference type="Gene3D" id="3.30.980.10">
    <property type="entry name" value="Threonyl-trna Synthetase, Chain A, domain 2"/>
    <property type="match status" value="1"/>
</dbReference>
<dbReference type="HAMAP" id="MF_00184">
    <property type="entry name" value="Thr_tRNA_synth"/>
    <property type="match status" value="1"/>
</dbReference>
<dbReference type="InterPro" id="IPR002314">
    <property type="entry name" value="aa-tRNA-synt_IIb"/>
</dbReference>
<dbReference type="InterPro" id="IPR006195">
    <property type="entry name" value="aa-tRNA-synth_II"/>
</dbReference>
<dbReference type="InterPro" id="IPR045864">
    <property type="entry name" value="aa-tRNA-synth_II/BPL/LPL"/>
</dbReference>
<dbReference type="InterPro" id="IPR004154">
    <property type="entry name" value="Anticodon-bd"/>
</dbReference>
<dbReference type="InterPro" id="IPR036621">
    <property type="entry name" value="Anticodon-bd_dom_sf"/>
</dbReference>
<dbReference type="InterPro" id="IPR012675">
    <property type="entry name" value="Beta-grasp_dom_sf"/>
</dbReference>
<dbReference type="InterPro" id="IPR004095">
    <property type="entry name" value="TGS"/>
</dbReference>
<dbReference type="InterPro" id="IPR012676">
    <property type="entry name" value="TGS-like"/>
</dbReference>
<dbReference type="InterPro" id="IPR002320">
    <property type="entry name" value="Thr-tRNA-ligase_IIa"/>
</dbReference>
<dbReference type="InterPro" id="IPR018163">
    <property type="entry name" value="Thr/Ala-tRNA-synth_IIc_edit"/>
</dbReference>
<dbReference type="InterPro" id="IPR033728">
    <property type="entry name" value="ThrRS_core"/>
</dbReference>
<dbReference type="InterPro" id="IPR012947">
    <property type="entry name" value="tRNA_SAD"/>
</dbReference>
<dbReference type="NCBIfam" id="TIGR00418">
    <property type="entry name" value="thrS"/>
    <property type="match status" value="1"/>
</dbReference>
<dbReference type="PANTHER" id="PTHR11451:SF44">
    <property type="entry name" value="THREONINE--TRNA LIGASE, CHLOROPLASTIC_MITOCHONDRIAL 2"/>
    <property type="match status" value="1"/>
</dbReference>
<dbReference type="PANTHER" id="PTHR11451">
    <property type="entry name" value="THREONINE-TRNA LIGASE"/>
    <property type="match status" value="1"/>
</dbReference>
<dbReference type="Pfam" id="PF03129">
    <property type="entry name" value="HGTP_anticodon"/>
    <property type="match status" value="1"/>
</dbReference>
<dbReference type="Pfam" id="PF02824">
    <property type="entry name" value="TGS"/>
    <property type="match status" value="1"/>
</dbReference>
<dbReference type="Pfam" id="PF00587">
    <property type="entry name" value="tRNA-synt_2b"/>
    <property type="match status" value="1"/>
</dbReference>
<dbReference type="Pfam" id="PF07973">
    <property type="entry name" value="tRNA_SAD"/>
    <property type="match status" value="1"/>
</dbReference>
<dbReference type="PRINTS" id="PR01047">
    <property type="entry name" value="TRNASYNTHTHR"/>
</dbReference>
<dbReference type="SMART" id="SM00863">
    <property type="entry name" value="tRNA_SAD"/>
    <property type="match status" value="1"/>
</dbReference>
<dbReference type="SUPFAM" id="SSF52954">
    <property type="entry name" value="Class II aaRS ABD-related"/>
    <property type="match status" value="1"/>
</dbReference>
<dbReference type="SUPFAM" id="SSF55681">
    <property type="entry name" value="Class II aaRS and biotin synthetases"/>
    <property type="match status" value="1"/>
</dbReference>
<dbReference type="SUPFAM" id="SSF81271">
    <property type="entry name" value="TGS-like"/>
    <property type="match status" value="1"/>
</dbReference>
<dbReference type="SUPFAM" id="SSF55186">
    <property type="entry name" value="ThrRS/AlaRS common domain"/>
    <property type="match status" value="1"/>
</dbReference>
<dbReference type="PROSITE" id="PS50862">
    <property type="entry name" value="AA_TRNA_LIGASE_II"/>
    <property type="match status" value="1"/>
</dbReference>
<dbReference type="PROSITE" id="PS51880">
    <property type="entry name" value="TGS"/>
    <property type="match status" value="1"/>
</dbReference>
<comment type="function">
    <text evidence="1">Catalyzes the attachment of threonine to tRNA(Thr) in a two-step reaction: L-threonine is first activated by ATP to form Thr-AMP and then transferred to the acceptor end of tRNA(Thr). Also edits incorrectly charged L-seryl-tRNA(Thr).</text>
</comment>
<comment type="catalytic activity">
    <reaction evidence="1">
        <text>tRNA(Thr) + L-threonine + ATP = L-threonyl-tRNA(Thr) + AMP + diphosphate + H(+)</text>
        <dbReference type="Rhea" id="RHEA:24624"/>
        <dbReference type="Rhea" id="RHEA-COMP:9670"/>
        <dbReference type="Rhea" id="RHEA-COMP:9704"/>
        <dbReference type="ChEBI" id="CHEBI:15378"/>
        <dbReference type="ChEBI" id="CHEBI:30616"/>
        <dbReference type="ChEBI" id="CHEBI:33019"/>
        <dbReference type="ChEBI" id="CHEBI:57926"/>
        <dbReference type="ChEBI" id="CHEBI:78442"/>
        <dbReference type="ChEBI" id="CHEBI:78534"/>
        <dbReference type="ChEBI" id="CHEBI:456215"/>
        <dbReference type="EC" id="6.1.1.3"/>
    </reaction>
</comment>
<comment type="cofactor">
    <cofactor evidence="1">
        <name>Zn(2+)</name>
        <dbReference type="ChEBI" id="CHEBI:29105"/>
    </cofactor>
    <text evidence="1">Binds 1 zinc ion per subunit.</text>
</comment>
<comment type="subunit">
    <text evidence="1">Homodimer.</text>
</comment>
<comment type="subcellular location">
    <subcellularLocation>
        <location evidence="1">Cytoplasm</location>
    </subcellularLocation>
</comment>
<comment type="similarity">
    <text evidence="1">Belongs to the class-II aminoacyl-tRNA synthetase family.</text>
</comment>
<feature type="chain" id="PRO_1000058428" description="Threonine--tRNA ligase">
    <location>
        <begin position="1"/>
        <end position="638"/>
    </location>
</feature>
<feature type="domain" description="TGS" evidence="2">
    <location>
        <begin position="1"/>
        <end position="61"/>
    </location>
</feature>
<feature type="region of interest" description="Catalytic" evidence="1">
    <location>
        <begin position="242"/>
        <end position="533"/>
    </location>
</feature>
<feature type="binding site" evidence="1">
    <location>
        <position position="333"/>
    </location>
    <ligand>
        <name>Zn(2+)</name>
        <dbReference type="ChEBI" id="CHEBI:29105"/>
    </ligand>
</feature>
<feature type="binding site" evidence="1">
    <location>
        <position position="384"/>
    </location>
    <ligand>
        <name>Zn(2+)</name>
        <dbReference type="ChEBI" id="CHEBI:29105"/>
    </ligand>
</feature>
<feature type="binding site" evidence="1">
    <location>
        <position position="510"/>
    </location>
    <ligand>
        <name>Zn(2+)</name>
        <dbReference type="ChEBI" id="CHEBI:29105"/>
    </ligand>
</feature>
<evidence type="ECO:0000255" key="1">
    <source>
        <dbReference type="HAMAP-Rule" id="MF_00184"/>
    </source>
</evidence>
<evidence type="ECO:0000255" key="2">
    <source>
        <dbReference type="PROSITE-ProRule" id="PRU01228"/>
    </source>
</evidence>
<sequence>MPIITLPDGSKKVFEKSVTILEIAQSIGAGLAKATIAGKVNDVLLDATIPINSDSKVVIITSKDKEGIEIIRHSFAHLIGHAVKQIYSDIKMAIGPVIEDGFYYDIFSEYRFTPEDLIKIENRINKLIKTNYDVEILQVSKKEAIKTFKERDETFKLRIIEDIPEEGLINLYKHEEYIDMCRGPHVPNTRHLRHFKLLKLSGSYWRGNSENESLQRIYGTAWAKEKELNDYLKRIEEAEKRDHRKLGKKHSLFHIQEESPGMIFWHPNGWTIYQVLEKYIREILKKNDYLEIKTPQAVDKSLWEKSGHWEKFRDDMFTTASENRTYAIKPMNCPCHIQVFNQGLKSYKDLPIRLAEFGSCHRNEPSGALHGLMRVRNFTQDDAHIFCTEEQIQEEVSTFIDLVFEVYKTFGFDEIIIKLSTRPKKKVGSEEIWDKSEEALTKALDNKNLKWELQPGEGAFYGPKIEFSLKDCLNRVWQCGTIQVDFSMPIRLDATYVDIDNEKRNPVMLHRAILGSFERFIGILIEQYEAKFPIWLAPYQLTLLSITDRNIEKCLKFNELLINNGYRSTVDIRNEKIGYKIREATLERVPLIAVIGDKEEEIDSVSLRALDGRNLGIFNLPNLCKLMDGLIEKRGRTE</sequence>
<gene>
    <name evidence="1" type="primary">thrS</name>
    <name type="ordered locus">P9215_06791</name>
</gene>
<protein>
    <recommendedName>
        <fullName evidence="1">Threonine--tRNA ligase</fullName>
        <ecNumber evidence="1">6.1.1.3</ecNumber>
    </recommendedName>
    <alternativeName>
        <fullName evidence="1">Threonyl-tRNA synthetase</fullName>
        <shortName evidence="1">ThrRS</shortName>
    </alternativeName>
</protein>
<keyword id="KW-0030">Aminoacyl-tRNA synthetase</keyword>
<keyword id="KW-0067">ATP-binding</keyword>
<keyword id="KW-0963">Cytoplasm</keyword>
<keyword id="KW-0436">Ligase</keyword>
<keyword id="KW-0479">Metal-binding</keyword>
<keyword id="KW-0547">Nucleotide-binding</keyword>
<keyword id="KW-0648">Protein biosynthesis</keyword>
<keyword id="KW-0694">RNA-binding</keyword>
<keyword id="KW-0820">tRNA-binding</keyword>
<keyword id="KW-0862">Zinc</keyword>
<proteinExistence type="inferred from homology"/>
<accession>A8G3W3</accession>